<protein>
    <recommendedName>
        <fullName>Cytochrome c oxidase subunit 1</fullName>
        <ecNumber>7.1.1.9</ecNumber>
    </recommendedName>
    <alternativeName>
        <fullName>Cytochrome c oxidase polypeptide I</fullName>
    </alternativeName>
</protein>
<organism>
    <name type="scientific">Halichoerus grypus</name>
    <name type="common">Gray seal</name>
    <name type="synonym">Phoca grypus</name>
    <dbReference type="NCBI Taxonomy" id="9711"/>
    <lineage>
        <taxon>Eukaryota</taxon>
        <taxon>Metazoa</taxon>
        <taxon>Chordata</taxon>
        <taxon>Craniata</taxon>
        <taxon>Vertebrata</taxon>
        <taxon>Euteleostomi</taxon>
        <taxon>Mammalia</taxon>
        <taxon>Eutheria</taxon>
        <taxon>Laurasiatheria</taxon>
        <taxon>Carnivora</taxon>
        <taxon>Caniformia</taxon>
        <taxon>Pinnipedia</taxon>
        <taxon>Phocidae</taxon>
        <taxon>Phocinae</taxon>
        <taxon>Halichoerus</taxon>
    </lineage>
</organism>
<proteinExistence type="inferred from homology"/>
<dbReference type="EC" id="7.1.1.9"/>
<dbReference type="EMBL" id="X72004">
    <property type="protein sequence ID" value="CAA50879.1"/>
    <property type="molecule type" value="Genomic_DNA"/>
</dbReference>
<dbReference type="PIR" id="S41837">
    <property type="entry name" value="S41837"/>
</dbReference>
<dbReference type="RefSeq" id="NP_007071.1">
    <property type="nucleotide sequence ID" value="NC_001602.1"/>
</dbReference>
<dbReference type="SMR" id="P38595"/>
<dbReference type="GeneID" id="807758"/>
<dbReference type="CTD" id="4512"/>
<dbReference type="UniPathway" id="UPA00705"/>
<dbReference type="GO" id="GO:0005743">
    <property type="term" value="C:mitochondrial inner membrane"/>
    <property type="evidence" value="ECO:0007669"/>
    <property type="project" value="UniProtKB-SubCell"/>
</dbReference>
<dbReference type="GO" id="GO:0045277">
    <property type="term" value="C:respiratory chain complex IV"/>
    <property type="evidence" value="ECO:0000250"/>
    <property type="project" value="UniProtKB"/>
</dbReference>
<dbReference type="GO" id="GO:0004129">
    <property type="term" value="F:cytochrome-c oxidase activity"/>
    <property type="evidence" value="ECO:0007669"/>
    <property type="project" value="UniProtKB-EC"/>
</dbReference>
<dbReference type="GO" id="GO:0020037">
    <property type="term" value="F:heme binding"/>
    <property type="evidence" value="ECO:0007669"/>
    <property type="project" value="InterPro"/>
</dbReference>
<dbReference type="GO" id="GO:0046872">
    <property type="term" value="F:metal ion binding"/>
    <property type="evidence" value="ECO:0007669"/>
    <property type="project" value="UniProtKB-KW"/>
</dbReference>
<dbReference type="GO" id="GO:0015990">
    <property type="term" value="P:electron transport coupled proton transport"/>
    <property type="evidence" value="ECO:0007669"/>
    <property type="project" value="TreeGrafter"/>
</dbReference>
<dbReference type="GO" id="GO:0006123">
    <property type="term" value="P:mitochondrial electron transport, cytochrome c to oxygen"/>
    <property type="evidence" value="ECO:0007669"/>
    <property type="project" value="TreeGrafter"/>
</dbReference>
<dbReference type="CDD" id="cd01663">
    <property type="entry name" value="Cyt_c_Oxidase_I"/>
    <property type="match status" value="1"/>
</dbReference>
<dbReference type="FunFam" id="1.20.210.10:FF:000001">
    <property type="entry name" value="Cytochrome c oxidase subunit 1"/>
    <property type="match status" value="1"/>
</dbReference>
<dbReference type="Gene3D" id="1.20.210.10">
    <property type="entry name" value="Cytochrome c oxidase-like, subunit I domain"/>
    <property type="match status" value="1"/>
</dbReference>
<dbReference type="InterPro" id="IPR023616">
    <property type="entry name" value="Cyt_c_oxase-like_su1_dom"/>
</dbReference>
<dbReference type="InterPro" id="IPR036927">
    <property type="entry name" value="Cyt_c_oxase-like_su1_sf"/>
</dbReference>
<dbReference type="InterPro" id="IPR000883">
    <property type="entry name" value="Cyt_C_Oxase_1"/>
</dbReference>
<dbReference type="InterPro" id="IPR023615">
    <property type="entry name" value="Cyt_c_Oxase_su1_BS"/>
</dbReference>
<dbReference type="InterPro" id="IPR033944">
    <property type="entry name" value="Cyt_c_oxase_su1_dom"/>
</dbReference>
<dbReference type="PANTHER" id="PTHR10422">
    <property type="entry name" value="CYTOCHROME C OXIDASE SUBUNIT 1"/>
    <property type="match status" value="1"/>
</dbReference>
<dbReference type="PANTHER" id="PTHR10422:SF18">
    <property type="entry name" value="CYTOCHROME C OXIDASE SUBUNIT 1"/>
    <property type="match status" value="1"/>
</dbReference>
<dbReference type="Pfam" id="PF00115">
    <property type="entry name" value="COX1"/>
    <property type="match status" value="1"/>
</dbReference>
<dbReference type="PRINTS" id="PR01165">
    <property type="entry name" value="CYCOXIDASEI"/>
</dbReference>
<dbReference type="SUPFAM" id="SSF81442">
    <property type="entry name" value="Cytochrome c oxidase subunit I-like"/>
    <property type="match status" value="1"/>
</dbReference>
<dbReference type="PROSITE" id="PS50855">
    <property type="entry name" value="COX1"/>
    <property type="match status" value="1"/>
</dbReference>
<dbReference type="PROSITE" id="PS00077">
    <property type="entry name" value="COX1_CUB"/>
    <property type="match status" value="1"/>
</dbReference>
<gene>
    <name type="primary">MT-CO1</name>
    <name type="synonym">COI</name>
    <name type="synonym">COXI</name>
    <name type="synonym">MTCO1</name>
</gene>
<comment type="function">
    <text evidence="3">Component of the cytochrome c oxidase, the last enzyme in the mitochondrial electron transport chain which drives oxidative phosphorylation. The respiratory chain contains 3 multisubunit complexes succinate dehydrogenase (complex II, CII), ubiquinol-cytochrome c oxidoreductase (cytochrome b-c1 complex, complex III, CIII) and cytochrome c oxidase (complex IV, CIV), that cooperate to transfer electrons derived from NADH and succinate to molecular oxygen, creating an electrochemical gradient over the inner membrane that drives transmembrane transport and the ATP synthase. Cytochrome c oxidase is the component of the respiratory chain that catalyzes the reduction of oxygen to water. Electrons originating from reduced cytochrome c in the intermembrane space (IMS) are transferred via the dinuclear copper A center (CU(A)) of subunit 2 and heme A of subunit 1 to the active site in subunit 1, a binuclear center (BNC) formed by heme A3 and copper B (CU(B)). The BNC reduces molecular oxygen to 2 water molecules using 4 electrons from cytochrome c in the IMS and 4 protons from the mitochondrial matrix.</text>
</comment>
<comment type="catalytic activity">
    <reaction evidence="3">
        <text>4 Fe(II)-[cytochrome c] + O2 + 8 H(+)(in) = 4 Fe(III)-[cytochrome c] + 2 H2O + 4 H(+)(out)</text>
        <dbReference type="Rhea" id="RHEA:11436"/>
        <dbReference type="Rhea" id="RHEA-COMP:10350"/>
        <dbReference type="Rhea" id="RHEA-COMP:14399"/>
        <dbReference type="ChEBI" id="CHEBI:15377"/>
        <dbReference type="ChEBI" id="CHEBI:15378"/>
        <dbReference type="ChEBI" id="CHEBI:15379"/>
        <dbReference type="ChEBI" id="CHEBI:29033"/>
        <dbReference type="ChEBI" id="CHEBI:29034"/>
        <dbReference type="EC" id="7.1.1.9"/>
    </reaction>
    <physiologicalReaction direction="left-to-right" evidence="3">
        <dbReference type="Rhea" id="RHEA:11437"/>
    </physiologicalReaction>
</comment>
<comment type="cofactor">
    <cofactor evidence="2">
        <name>heme</name>
        <dbReference type="ChEBI" id="CHEBI:30413"/>
    </cofactor>
    <text evidence="2">Binds 2 heme A groups non-covalently per subunit.</text>
</comment>
<comment type="cofactor">
    <cofactor evidence="2">
        <name>Cu cation</name>
        <dbReference type="ChEBI" id="CHEBI:23378"/>
    </cofactor>
    <text evidence="2">Binds a copper B center.</text>
</comment>
<comment type="pathway">
    <text evidence="3">Energy metabolism; oxidative phosphorylation.</text>
</comment>
<comment type="subunit">
    <text evidence="1 2">Component of the cytochrome c oxidase (complex IV, CIV), a multisubunit enzyme composed of 14 subunits. The complex is composed of a catalytic core of 3 subunits MT-CO1, MT-CO2 and MT-CO3, encoded in the mitochondrial DNA, and 11 supernumerary subunits COX4I, COX5A, COX5B, COX6A, COX6B, COX6C, COX7A, COX7B, COX7C, COX8 and NDUFA4, which are encoded in the nuclear genome. The complex exists as a monomer or a dimer and forms supercomplexes (SCs) in the inner mitochondrial membrane with NADH-ubiquinone oxidoreductase (complex I, CI) and ubiquinol-cytochrome c oxidoreductase (cytochrome b-c1 complex, complex III, CIII), resulting in different assemblies (supercomplex SCI(1)III(2)IV(1) and megacomplex MCI(2)III(2)IV(2)) (By similarity). As a newly synthesized protein, rapidly incorporates into a multi-subunit assembly intermediate in the inner membrane, called MITRAC (mitochondrial translation regulation assembly intermediate of cytochrome c oxidase) complex, whose core components are COA3/MITRAC12 and COX14. Within the MITRAC complex, interacts with COA3 and with SMIM20/MITRAC7; the interaction with SMIM20 stabilizes the newly synthesized MT-CO1 and prevents its premature turnover. Interacts with TMEM177 in a COX20-dependent manner (By similarity).</text>
</comment>
<comment type="subcellular location">
    <subcellularLocation>
        <location evidence="2">Mitochondrion inner membrane</location>
        <topology evidence="2">Multi-pass membrane protein</topology>
    </subcellularLocation>
</comment>
<comment type="similarity">
    <text evidence="4">Belongs to the heme-copper respiratory oxidase family.</text>
</comment>
<geneLocation type="mitochondrion"/>
<reference key="1">
    <citation type="journal article" date="1993" name="J. Mol. Evol.">
        <title>The nucleotide sequence of the mitochondrial DNA molecule of the grey seal, Halichoerus grypus, and a comparison with mitochondrial sequences of other true seals.</title>
        <authorList>
            <person name="Arnason U."/>
            <person name="Gullberg A."/>
            <person name="Johnsson E."/>
            <person name="Ledje C."/>
        </authorList>
    </citation>
    <scope>NUCLEOTIDE SEQUENCE [GENOMIC DNA]</scope>
</reference>
<sequence length="514" mass="56925">MFMDRWLFSTNHKDIGTLYLLFGAWAGMAGTALSLLIRAELGQPGALLGDDQIYNVIVTAHAFVMIFFMVMPIMIGGFGNWLVPLMIGAPDMAFPRMNNMSFWLLPPSFLLLLASSMVEAGAGTGWTVYPPLAGNLAHAGASVDLTIFSLHLAGVSSILGAINFITTIINMKPPAMSQYQTPLFVWSVLITAVLLLLSLPVLAAGITMLLTDRNLNTTFFDPAGGGDPILYQHLFWFFGHPEVYILILPGFGMISHIVTYYSGKKEPFGYMGMVWAMMSIGFLGFIVWAHHMFTVGMDVDTRAYFTSATMIIAIPTGVKVFSWLATLHGGNIKWSPAMLWALGFIFLFTVGGLTGIVLANSSLDIVLHDTYYVVAHFHYVLSMGAVFAIMGGFVHWFPLFSGYTLDNTWAKIHFTIMFVGVNMTFFPQHFLGLSGMPRRYSDYPDAYTTWNTVSSMGSFISLTAVMLMVFMIWEAFASKREVAAVELTTTNIEWLHGCPPPYHTFEEPTYVVLK</sequence>
<keyword id="KW-0106">Calcium</keyword>
<keyword id="KW-0186">Copper</keyword>
<keyword id="KW-0249">Electron transport</keyword>
<keyword id="KW-0349">Heme</keyword>
<keyword id="KW-0408">Iron</keyword>
<keyword id="KW-0460">Magnesium</keyword>
<keyword id="KW-0472">Membrane</keyword>
<keyword id="KW-0479">Metal-binding</keyword>
<keyword id="KW-0496">Mitochondrion</keyword>
<keyword id="KW-0999">Mitochondrion inner membrane</keyword>
<keyword id="KW-0679">Respiratory chain</keyword>
<keyword id="KW-0915">Sodium</keyword>
<keyword id="KW-1278">Translocase</keyword>
<keyword id="KW-0812">Transmembrane</keyword>
<keyword id="KW-1133">Transmembrane helix</keyword>
<keyword id="KW-0813">Transport</keyword>
<feature type="chain" id="PRO_0000183340" description="Cytochrome c oxidase subunit 1">
    <location>
        <begin position="1"/>
        <end position="514"/>
    </location>
</feature>
<feature type="topological domain" description="Mitochondrial matrix" evidence="2">
    <location>
        <begin position="1"/>
        <end position="11"/>
    </location>
</feature>
<feature type="transmembrane region" description="Helical; Name=I" evidence="2">
    <location>
        <begin position="12"/>
        <end position="40"/>
    </location>
</feature>
<feature type="topological domain" description="Mitochondrial intermembrane" evidence="2">
    <location>
        <begin position="41"/>
        <end position="50"/>
    </location>
</feature>
<feature type="transmembrane region" description="Helical; Name=II" evidence="2">
    <location>
        <begin position="51"/>
        <end position="86"/>
    </location>
</feature>
<feature type="topological domain" description="Mitochondrial matrix" evidence="2">
    <location>
        <begin position="87"/>
        <end position="94"/>
    </location>
</feature>
<feature type="transmembrane region" description="Helical; Name=III" evidence="2">
    <location>
        <begin position="95"/>
        <end position="117"/>
    </location>
</feature>
<feature type="topological domain" description="Mitochondrial intermembrane" evidence="2">
    <location>
        <begin position="118"/>
        <end position="140"/>
    </location>
</feature>
<feature type="transmembrane region" description="Helical; Name=IV" evidence="2">
    <location>
        <begin position="141"/>
        <end position="170"/>
    </location>
</feature>
<feature type="topological domain" description="Mitochondrial matrix" evidence="2">
    <location>
        <begin position="171"/>
        <end position="182"/>
    </location>
</feature>
<feature type="transmembrane region" description="Helical; Name=V" evidence="2">
    <location>
        <begin position="183"/>
        <end position="212"/>
    </location>
</feature>
<feature type="topological domain" description="Mitochondrial intermembrane" evidence="2">
    <location>
        <begin position="213"/>
        <end position="227"/>
    </location>
</feature>
<feature type="transmembrane region" description="Helical; Name=VI" evidence="2">
    <location>
        <begin position="228"/>
        <end position="261"/>
    </location>
</feature>
<feature type="topological domain" description="Mitochondrial matrix" evidence="2">
    <location>
        <begin position="262"/>
        <end position="269"/>
    </location>
</feature>
<feature type="transmembrane region" description="Helical; Name=VII" evidence="2">
    <location>
        <begin position="270"/>
        <end position="286"/>
    </location>
</feature>
<feature type="topological domain" description="Mitochondrial intermembrane" evidence="2">
    <location>
        <begin position="287"/>
        <end position="298"/>
    </location>
</feature>
<feature type="transmembrane region" description="Helical; Name=VIII" evidence="2">
    <location>
        <begin position="299"/>
        <end position="327"/>
    </location>
</feature>
<feature type="topological domain" description="Mitochondrial matrix" evidence="2">
    <location>
        <begin position="328"/>
        <end position="335"/>
    </location>
</feature>
<feature type="transmembrane region" description="Helical; Name=IX" evidence="2">
    <location>
        <begin position="336"/>
        <end position="357"/>
    </location>
</feature>
<feature type="topological domain" description="Mitochondrial intermembrane" evidence="2">
    <location>
        <begin position="358"/>
        <end position="370"/>
    </location>
</feature>
<feature type="transmembrane region" description="Helical; Name=X" evidence="2">
    <location>
        <begin position="371"/>
        <end position="400"/>
    </location>
</feature>
<feature type="topological domain" description="Mitochondrial matrix" evidence="2">
    <location>
        <begin position="401"/>
        <end position="406"/>
    </location>
</feature>
<feature type="transmembrane region" description="Helical; Name=XI" evidence="2">
    <location>
        <begin position="407"/>
        <end position="433"/>
    </location>
</feature>
<feature type="topological domain" description="Mitochondrial intermembrane" evidence="2">
    <location>
        <begin position="434"/>
        <end position="446"/>
    </location>
</feature>
<feature type="transmembrane region" description="Helical; Name=XII" evidence="2">
    <location>
        <begin position="447"/>
        <end position="478"/>
    </location>
</feature>
<feature type="topological domain" description="Mitochondrial matrix" evidence="2">
    <location>
        <begin position="479"/>
        <end position="514"/>
    </location>
</feature>
<feature type="binding site" evidence="2">
    <location>
        <position position="40"/>
    </location>
    <ligand>
        <name>Na(+)</name>
        <dbReference type="ChEBI" id="CHEBI:29101"/>
    </ligand>
</feature>
<feature type="binding site" evidence="2">
    <location>
        <position position="45"/>
    </location>
    <ligand>
        <name>Na(+)</name>
        <dbReference type="ChEBI" id="CHEBI:29101"/>
    </ligand>
</feature>
<feature type="binding site" description="axial binding residue" evidence="2">
    <location>
        <position position="61"/>
    </location>
    <ligand>
        <name>Fe(II)-heme a</name>
        <dbReference type="ChEBI" id="CHEBI:61715"/>
        <note>low-spin</note>
    </ligand>
    <ligandPart>
        <name>Fe</name>
        <dbReference type="ChEBI" id="CHEBI:18248"/>
    </ligandPart>
</feature>
<feature type="binding site" evidence="2">
    <location>
        <position position="240"/>
    </location>
    <ligand>
        <name>Cu cation</name>
        <dbReference type="ChEBI" id="CHEBI:23378"/>
        <label>B</label>
    </ligand>
</feature>
<feature type="binding site" evidence="2">
    <location>
        <position position="244"/>
    </location>
    <ligand>
        <name>O2</name>
        <dbReference type="ChEBI" id="CHEBI:15379"/>
    </ligand>
</feature>
<feature type="binding site" evidence="2">
    <location>
        <position position="290"/>
    </location>
    <ligand>
        <name>Cu cation</name>
        <dbReference type="ChEBI" id="CHEBI:23378"/>
        <label>B</label>
    </ligand>
</feature>
<feature type="binding site" evidence="2">
    <location>
        <position position="291"/>
    </location>
    <ligand>
        <name>Cu cation</name>
        <dbReference type="ChEBI" id="CHEBI:23378"/>
        <label>B</label>
    </ligand>
</feature>
<feature type="binding site" evidence="2">
    <location>
        <position position="368"/>
    </location>
    <ligand>
        <name>Mg(2+)</name>
        <dbReference type="ChEBI" id="CHEBI:18420"/>
        <note>ligand shared with MT-CO2</note>
    </ligand>
</feature>
<feature type="binding site" evidence="2">
    <location>
        <position position="369"/>
    </location>
    <ligand>
        <name>Mg(2+)</name>
        <dbReference type="ChEBI" id="CHEBI:18420"/>
        <note>ligand shared with MT-CO2</note>
    </ligand>
</feature>
<feature type="binding site" description="axial binding residue" evidence="2">
    <location>
        <position position="376"/>
    </location>
    <ligand>
        <name>heme a3</name>
        <dbReference type="ChEBI" id="CHEBI:83282"/>
        <note>high-spin</note>
    </ligand>
    <ligandPart>
        <name>Fe</name>
        <dbReference type="ChEBI" id="CHEBI:18248"/>
    </ligandPart>
</feature>
<feature type="binding site" description="axial binding residue" evidence="2">
    <location>
        <position position="378"/>
    </location>
    <ligand>
        <name>Fe(II)-heme a</name>
        <dbReference type="ChEBI" id="CHEBI:61715"/>
        <note>low-spin</note>
    </ligand>
    <ligandPart>
        <name>Fe</name>
        <dbReference type="ChEBI" id="CHEBI:18248"/>
    </ligandPart>
</feature>
<feature type="binding site" evidence="2">
    <location>
        <position position="441"/>
    </location>
    <ligand>
        <name>Na(+)</name>
        <dbReference type="ChEBI" id="CHEBI:29101"/>
    </ligand>
</feature>
<feature type="cross-link" description="1'-histidyl-3'-tyrosine (His-Tyr)" evidence="2">
    <location>
        <begin position="240"/>
        <end position="244"/>
    </location>
</feature>
<name>COX1_HALGR</name>
<evidence type="ECO:0000250" key="1">
    <source>
        <dbReference type="UniProtKB" id="P00395"/>
    </source>
</evidence>
<evidence type="ECO:0000250" key="2">
    <source>
        <dbReference type="UniProtKB" id="P00396"/>
    </source>
</evidence>
<evidence type="ECO:0000250" key="3">
    <source>
        <dbReference type="UniProtKB" id="P00401"/>
    </source>
</evidence>
<evidence type="ECO:0000305" key="4"/>
<accession>P38595</accession>